<sequence>MVNFSRKRPAVSSLFSQQQAIEQSLNWQALQPDLVIQDFPLEPVNFWALQPNATQGIDLFLRHPTRSLLMMKVGEPVEYAELLQNFISQNHHKVRSIFGVNYVIEQGDSFSFPHVYTEPAKSLDDNFASQGEALSALYCDQFQLFGSFRIHPRSQDIQLVPGLVHKANGGVLILSAATLLSQFDLWGRLKQILQTQTFDWYSAHPFKNLPCDIPSYALNLKVIVLGNRTELATLAELEENLYSFADYAEIESYISVAEVEEQKTWAGYVQQMAQEQNIELDFLALNKLYQLLVRESENRFLINASPLKLKEILQDASTFTEKTALSAVDFEGIFQQKLAQYGFLKEQTYADILNEQVYVETQGEIVGQINGLSVIEYPGTPVCFGEPSRISCIVQFGDGEVIDVERKNELAGNIHGKGMMIAQACLSNILDLPSQLPFSASLVFEQSYGEIDGDSASLAIFCVLVSALADLPLPQHIAITGSIDQFGLVHSVGGVNDKIEGFFTICQRRGLTGKQGVIIPMTTIQQLSLSDDVKSAVKNGEFFIYPVEDIYQACELLFGRDLLDENKDYTEKTESLSRLIQRRIEGRADSERKSFWHFFRS</sequence>
<gene>
    <name type="ordered locus">HI_1324</name>
</gene>
<reference key="1">
    <citation type="journal article" date="1995" name="Science">
        <title>Whole-genome random sequencing and assembly of Haemophilus influenzae Rd.</title>
        <authorList>
            <person name="Fleischmann R.D."/>
            <person name="Adams M.D."/>
            <person name="White O."/>
            <person name="Clayton R.A."/>
            <person name="Kirkness E.F."/>
            <person name="Kerlavage A.R."/>
            <person name="Bult C.J."/>
            <person name="Tomb J.-F."/>
            <person name="Dougherty B.A."/>
            <person name="Merrick J.M."/>
            <person name="McKenney K."/>
            <person name="Sutton G.G."/>
            <person name="FitzHugh W."/>
            <person name="Fields C.A."/>
            <person name="Gocayne J.D."/>
            <person name="Scott J.D."/>
            <person name="Shirley R."/>
            <person name="Liu L.-I."/>
            <person name="Glodek A."/>
            <person name="Kelley J.M."/>
            <person name="Weidman J.F."/>
            <person name="Phillips C.A."/>
            <person name="Spriggs T."/>
            <person name="Hedblom E."/>
            <person name="Cotton M.D."/>
            <person name="Utterback T.R."/>
            <person name="Hanna M.C."/>
            <person name="Nguyen D.T."/>
            <person name="Saudek D.M."/>
            <person name="Brandon R.C."/>
            <person name="Fine L.D."/>
            <person name="Fritchman J.L."/>
            <person name="Fuhrmann J.L."/>
            <person name="Geoghagen N.S.M."/>
            <person name="Gnehm C.L."/>
            <person name="McDonald L.A."/>
            <person name="Small K.V."/>
            <person name="Fraser C.M."/>
            <person name="Smith H.O."/>
            <person name="Venter J.C."/>
        </authorList>
    </citation>
    <scope>NUCLEOTIDE SEQUENCE [LARGE SCALE GENOMIC DNA]</scope>
    <source>
        <strain>ATCC 51907 / DSM 11121 / KW20 / Rd</strain>
    </source>
</reference>
<evidence type="ECO:0000255" key="1">
    <source>
        <dbReference type="PROSITE-ProRule" id="PRU01122"/>
    </source>
</evidence>
<evidence type="ECO:0000255" key="2">
    <source>
        <dbReference type="PROSITE-ProRule" id="PRU10087"/>
    </source>
</evidence>
<feature type="chain" id="PRO_0000076149" description="Putative Lon protease homolog">
    <location>
        <begin position="1"/>
        <end position="601"/>
    </location>
</feature>
<feature type="domain" description="Lon proteolytic" evidence="1">
    <location>
        <begin position="363"/>
        <end position="560"/>
    </location>
</feature>
<feature type="active site" evidence="2">
    <location>
        <position position="455"/>
    </location>
</feature>
<feature type="active site" evidence="2">
    <location>
        <position position="498"/>
    </location>
</feature>
<dbReference type="EC" id="3.4.21.-"/>
<dbReference type="EMBL" id="L42023">
    <property type="protein sequence ID" value="AAC22971.1"/>
    <property type="molecule type" value="Genomic_DNA"/>
</dbReference>
<dbReference type="PIR" id="F64116">
    <property type="entry name" value="F64116"/>
</dbReference>
<dbReference type="RefSeq" id="NP_439475.1">
    <property type="nucleotide sequence ID" value="NC_000907.1"/>
</dbReference>
<dbReference type="SMR" id="P43865"/>
<dbReference type="STRING" id="71421.HI_1324"/>
<dbReference type="MEROPS" id="S16.A10"/>
<dbReference type="EnsemblBacteria" id="AAC22971">
    <property type="protein sequence ID" value="AAC22971"/>
    <property type="gene ID" value="HI_1324"/>
</dbReference>
<dbReference type="KEGG" id="hin:HI_1324"/>
<dbReference type="PATRIC" id="fig|71421.8.peg.1376"/>
<dbReference type="eggNOG" id="COG1067">
    <property type="taxonomic scope" value="Bacteria"/>
</dbReference>
<dbReference type="HOGENOM" id="CLU_014785_2_0_6"/>
<dbReference type="OrthoDB" id="9758568at2"/>
<dbReference type="PhylomeDB" id="P43865"/>
<dbReference type="BioCyc" id="HINF71421:G1GJ1-1349-MONOMER"/>
<dbReference type="Proteomes" id="UP000000579">
    <property type="component" value="Chromosome"/>
</dbReference>
<dbReference type="GO" id="GO:0005524">
    <property type="term" value="F:ATP binding"/>
    <property type="evidence" value="ECO:0007669"/>
    <property type="project" value="InterPro"/>
</dbReference>
<dbReference type="GO" id="GO:0004176">
    <property type="term" value="F:ATP-dependent peptidase activity"/>
    <property type="evidence" value="ECO:0007669"/>
    <property type="project" value="InterPro"/>
</dbReference>
<dbReference type="GO" id="GO:0004252">
    <property type="term" value="F:serine-type endopeptidase activity"/>
    <property type="evidence" value="ECO:0007669"/>
    <property type="project" value="InterPro"/>
</dbReference>
<dbReference type="GO" id="GO:0030163">
    <property type="term" value="P:protein catabolic process"/>
    <property type="evidence" value="ECO:0007669"/>
    <property type="project" value="InterPro"/>
</dbReference>
<dbReference type="GO" id="GO:0006508">
    <property type="term" value="P:proteolysis"/>
    <property type="evidence" value="ECO:0007669"/>
    <property type="project" value="UniProtKB-KW"/>
</dbReference>
<dbReference type="Gene3D" id="3.30.230.10">
    <property type="match status" value="1"/>
</dbReference>
<dbReference type="Gene3D" id="3.40.50.300">
    <property type="entry name" value="P-loop containing nucleotide triphosphate hydrolases"/>
    <property type="match status" value="1"/>
</dbReference>
<dbReference type="InterPro" id="IPR041699">
    <property type="entry name" value="AAA_32"/>
</dbReference>
<dbReference type="InterPro" id="IPR008269">
    <property type="entry name" value="Lon_proteolytic"/>
</dbReference>
<dbReference type="InterPro" id="IPR027065">
    <property type="entry name" value="Lon_Prtase"/>
</dbReference>
<dbReference type="InterPro" id="IPR027417">
    <property type="entry name" value="P-loop_NTPase"/>
</dbReference>
<dbReference type="InterPro" id="IPR008268">
    <property type="entry name" value="Peptidase_S16_AS"/>
</dbReference>
<dbReference type="InterPro" id="IPR020568">
    <property type="entry name" value="Ribosomal_Su5_D2-typ_SF"/>
</dbReference>
<dbReference type="InterPro" id="IPR014721">
    <property type="entry name" value="Ribsml_uS5_D2-typ_fold_subgr"/>
</dbReference>
<dbReference type="PANTHER" id="PTHR10046">
    <property type="entry name" value="ATP DEPENDENT LON PROTEASE FAMILY MEMBER"/>
    <property type="match status" value="1"/>
</dbReference>
<dbReference type="Pfam" id="PF13654">
    <property type="entry name" value="AAA_32"/>
    <property type="match status" value="1"/>
</dbReference>
<dbReference type="Pfam" id="PF05362">
    <property type="entry name" value="Lon_C"/>
    <property type="match status" value="1"/>
</dbReference>
<dbReference type="PRINTS" id="PR00830">
    <property type="entry name" value="ENDOLAPTASE"/>
</dbReference>
<dbReference type="SUPFAM" id="SSF54211">
    <property type="entry name" value="Ribosomal protein S5 domain 2-like"/>
    <property type="match status" value="1"/>
</dbReference>
<dbReference type="PROSITE" id="PS51786">
    <property type="entry name" value="LON_PROTEOLYTIC"/>
    <property type="match status" value="1"/>
</dbReference>
<dbReference type="PROSITE" id="PS01046">
    <property type="entry name" value="LON_SER"/>
    <property type="match status" value="1"/>
</dbReference>
<name>LONH_HAEIN</name>
<keyword id="KW-0378">Hydrolase</keyword>
<keyword id="KW-0645">Protease</keyword>
<keyword id="KW-1185">Reference proteome</keyword>
<keyword id="KW-0720">Serine protease</keyword>
<protein>
    <recommendedName>
        <fullName>Putative Lon protease homolog</fullName>
        <ecNumber>3.4.21.-</ecNumber>
    </recommendedName>
    <alternativeName>
        <fullName>ATP-dependent protease La homolog</fullName>
    </alternativeName>
</protein>
<proteinExistence type="inferred from homology"/>
<comment type="domain">
    <text>Lacks the ATP-binding domain.</text>
</comment>
<comment type="similarity">
    <text evidence="1">Belongs to the peptidase S16 family.</text>
</comment>
<organism>
    <name type="scientific">Haemophilus influenzae (strain ATCC 51907 / DSM 11121 / KW20 / Rd)</name>
    <dbReference type="NCBI Taxonomy" id="71421"/>
    <lineage>
        <taxon>Bacteria</taxon>
        <taxon>Pseudomonadati</taxon>
        <taxon>Pseudomonadota</taxon>
        <taxon>Gammaproteobacteria</taxon>
        <taxon>Pasteurellales</taxon>
        <taxon>Pasteurellaceae</taxon>
        <taxon>Haemophilus</taxon>
    </lineage>
</organism>
<accession>P43865</accession>